<feature type="chain" id="PRO_0000217184" description="300 kDa antigen AG231">
    <location>
        <begin position="1" status="less than"/>
        <end position="310" status="greater than"/>
    </location>
</feature>
<feature type="repeat" description="45 AA repeat 1">
    <location>
        <begin position="107"/>
        <end position="152"/>
    </location>
</feature>
<feature type="repeat" description="45 AA repeat 2">
    <location>
        <begin position="266"/>
        <end position="310"/>
    </location>
</feature>
<feature type="region of interest" description="4 X 6 AA tandem repeats of V-V-T-G-S-C">
    <location>
        <begin position="1" status="less than"/>
        <end position="23"/>
    </location>
</feature>
<feature type="region of interest" description="13 X 6 AA tandem repeats of V-V-[TI]-[QE]-E-[PH]">
    <location>
        <begin position="29"/>
        <end position="106"/>
    </location>
</feature>
<feature type="region of interest" description="Disordered" evidence="1">
    <location>
        <begin position="53"/>
        <end position="310"/>
    </location>
</feature>
<feature type="region of interest" description="13 X 6 AA approximate tandem repeats">
    <location>
        <begin position="188"/>
        <end position="265"/>
    </location>
</feature>
<feature type="compositionally biased region" description="Low complexity" evidence="1">
    <location>
        <begin position="53"/>
        <end position="101"/>
    </location>
</feature>
<feature type="compositionally biased region" description="Basic and acidic residues" evidence="1">
    <location>
        <begin position="103"/>
        <end position="114"/>
    </location>
</feature>
<feature type="compositionally biased region" description="Basic and acidic residues" evidence="1">
    <location>
        <begin position="147"/>
        <end position="160"/>
    </location>
</feature>
<feature type="compositionally biased region" description="Polar residues" evidence="1">
    <location>
        <begin position="176"/>
        <end position="190"/>
    </location>
</feature>
<feature type="compositionally biased region" description="Low complexity" evidence="1">
    <location>
        <begin position="191"/>
        <end position="235"/>
    </location>
</feature>
<feature type="compositionally biased region" description="Polar residues" evidence="1">
    <location>
        <begin position="236"/>
        <end position="263"/>
    </location>
</feature>
<feature type="compositionally biased region" description="Basic and acidic residues" evidence="1">
    <location>
        <begin position="264"/>
        <end position="273"/>
    </location>
</feature>
<feature type="non-terminal residue">
    <location>
        <position position="1"/>
    </location>
</feature>
<feature type="non-terminal residue">
    <location>
        <position position="310"/>
    </location>
</feature>
<keyword id="KW-0461">Malaria</keyword>
<keyword id="KW-0477">Merozoite</keyword>
<keyword id="KW-0677">Repeat</keyword>
<dbReference type="EMBL" id="M10236">
    <property type="protein sequence ID" value="AAA29468.1"/>
    <property type="molecule type" value="mRNA"/>
</dbReference>
<dbReference type="PIR" id="A21890">
    <property type="entry name" value="YAZQ31"/>
</dbReference>
<dbReference type="InterPro" id="IPR009745">
    <property type="entry name" value="CRAM_rpt"/>
</dbReference>
<dbReference type="InterPro" id="IPR019541">
    <property type="entry name" value="Trappin_transglut-bd_rpt"/>
</dbReference>
<dbReference type="PANTHER" id="PTHR36911:SF1">
    <property type="entry name" value="LIM ZINC-BINDING DOMAIN-CONTAINING PROTEIN"/>
    <property type="match status" value="1"/>
</dbReference>
<dbReference type="PANTHER" id="PTHR36911">
    <property type="entry name" value="LIM ZINC-BINDING DOMAIN-CONTAINING PROTEIN-RELATED"/>
    <property type="match status" value="1"/>
</dbReference>
<dbReference type="Pfam" id="PF10511">
    <property type="entry name" value="Cementoin"/>
    <property type="match status" value="7"/>
</dbReference>
<dbReference type="Pfam" id="PF07016">
    <property type="entry name" value="CRAM_rpt"/>
    <property type="match status" value="1"/>
</dbReference>
<gene>
    <name type="primary">FIRA</name>
</gene>
<organism>
    <name type="scientific">Plasmodium falciparum (isolate FC27 / Papua New Guinea)</name>
    <dbReference type="NCBI Taxonomy" id="5837"/>
    <lineage>
        <taxon>Eukaryota</taxon>
        <taxon>Sar</taxon>
        <taxon>Alveolata</taxon>
        <taxon>Apicomplexa</taxon>
        <taxon>Aconoidasida</taxon>
        <taxon>Haemosporida</taxon>
        <taxon>Plasmodiidae</taxon>
        <taxon>Plasmodium</taxon>
        <taxon>Plasmodium (Laverania)</taxon>
    </lineage>
</organism>
<proteinExistence type="evidence at transcript level"/>
<sequence length="310" mass="33968">VTGSCVVTGSCVVTDSCVVTGSCGNTRTVTTQESVTTQEPVTIEEPVTTQEPVTIEEPVTTQEPVTIEEPVTTQEPVTTQEPVTTQEPVTTQEPVTTQEPVTVEEHIDEKKGSEGDNISLSSLSEETEEKSHTKKKKSSWLKFGRGNKNDKKSKNEKKPSLESVKQNADEQKEQPTDSQISVNAQDSVTIQEPTATQEPPTTQELTATQEPTTTQETVTEQEPTTTQETVTAQEPITTQEPVTAQEPVTTQELIATQEPSTTQEHADEKKASEGDNISLSRLSEETEEKSHTKKKSSWLKFGRGNKNDKK</sequence>
<reference key="1">
    <citation type="journal article" date="1985" name="Proc. Natl. Acad. Sci. U.S.A.">
        <title>Interspersed blocks of repetitive and charged amino acids in a dominant immunogen of Plasmodium falciparum.</title>
        <authorList>
            <person name="Stahl H.-D."/>
            <person name="Crewther P.E."/>
            <person name="Anders R.F."/>
            <person name="Brown G.V."/>
            <person name="Coppel R.L."/>
            <person name="Bianco A.E."/>
            <person name="Mitchell G.F."/>
            <person name="Kemp D.J."/>
        </authorList>
    </citation>
    <scope>NUCLEOTIDE SEQUENCE [MRNA]</scope>
</reference>
<protein>
    <recommendedName>
        <fullName>300 kDa antigen AG231</fullName>
    </recommendedName>
</protein>
<evidence type="ECO:0000256" key="1">
    <source>
        <dbReference type="SAM" id="MobiDB-lite"/>
    </source>
</evidence>
<accession>P06916</accession>
<name>FIRA_PLAFF</name>